<accession>Q9NYZ4</accession>
<accession>Q7Z728</accession>
<protein>
    <recommendedName>
        <fullName>Sialic acid-binding Ig-like lectin 8</fullName>
        <shortName>Siglec-8</shortName>
    </recommendedName>
    <alternativeName>
        <fullName>Sialoadhesin family member 2</fullName>
        <shortName>SAF-2</shortName>
    </alternativeName>
</protein>
<dbReference type="EMBL" id="AF287892">
    <property type="protein sequence ID" value="AAG00573.1"/>
    <property type="molecule type" value="Genomic_DNA"/>
</dbReference>
<dbReference type="EMBL" id="AF223403">
    <property type="protein sequence ID" value="AAF34702.1"/>
    <property type="molecule type" value="mRNA"/>
</dbReference>
<dbReference type="EMBL" id="AF195092">
    <property type="protein sequence ID" value="AAF27622.1"/>
    <property type="molecule type" value="mRNA"/>
</dbReference>
<dbReference type="EMBL" id="AF310234">
    <property type="protein sequence ID" value="AAK55140.1"/>
    <property type="molecule type" value="mRNA"/>
</dbReference>
<dbReference type="EMBL" id="BC053319">
    <property type="protein sequence ID" value="AAH53319.1"/>
    <property type="molecule type" value="mRNA"/>
</dbReference>
<dbReference type="CCDS" id="CCDS33086.1">
    <molecule id="Q9NYZ4-1"/>
</dbReference>
<dbReference type="CCDS" id="CCDS86797.1">
    <molecule id="Q9NYZ4-2"/>
</dbReference>
<dbReference type="RefSeq" id="NP_001350477.1">
    <molecule id="Q9NYZ4-2"/>
    <property type="nucleotide sequence ID" value="NM_001363548.1"/>
</dbReference>
<dbReference type="RefSeq" id="NP_055257.2">
    <molecule id="Q9NYZ4-1"/>
    <property type="nucleotide sequence ID" value="NM_014442.3"/>
</dbReference>
<dbReference type="RefSeq" id="XP_011525037.1">
    <property type="nucleotide sequence ID" value="XM_011526735.2"/>
</dbReference>
<dbReference type="PDB" id="2N7A">
    <property type="method" value="NMR"/>
    <property type="chains" value="A=17-155"/>
</dbReference>
<dbReference type="PDB" id="2N7B">
    <property type="method" value="NMR"/>
    <property type="chains" value="A=17-155"/>
</dbReference>
<dbReference type="PDB" id="7QU6">
    <property type="method" value="X-ray"/>
    <property type="resolution" value="2.34 A"/>
    <property type="chains" value="A/B/C/D/E/F=17-155"/>
</dbReference>
<dbReference type="PDB" id="7QUH">
    <property type="method" value="X-ray"/>
    <property type="resolution" value="2.87 A"/>
    <property type="chains" value="A=17-352"/>
</dbReference>
<dbReference type="PDB" id="7QUI">
    <property type="method" value="X-ray"/>
    <property type="resolution" value="3.35 A"/>
    <property type="chains" value="A/B=17-155"/>
</dbReference>
<dbReference type="PDBsum" id="2N7A"/>
<dbReference type="PDBsum" id="2N7B"/>
<dbReference type="PDBsum" id="7QU6"/>
<dbReference type="PDBsum" id="7QUH"/>
<dbReference type="PDBsum" id="7QUI"/>
<dbReference type="SMR" id="Q9NYZ4"/>
<dbReference type="BioGRID" id="118057">
    <property type="interactions" value="1"/>
</dbReference>
<dbReference type="FunCoup" id="Q9NYZ4">
    <property type="interactions" value="425"/>
</dbReference>
<dbReference type="IntAct" id="Q9NYZ4">
    <property type="interactions" value="1"/>
</dbReference>
<dbReference type="STRING" id="9606.ENSP00000321077"/>
<dbReference type="ChEMBL" id="CHEMBL4630877"/>
<dbReference type="UniLectin" id="Q9NYZ4"/>
<dbReference type="GlyConnect" id="570">
    <property type="glycosylation" value="14 N-Linked glycans"/>
</dbReference>
<dbReference type="GlyCosmos" id="Q9NYZ4">
    <property type="glycosylation" value="3 sites, 27 glycans"/>
</dbReference>
<dbReference type="GlyGen" id="Q9NYZ4">
    <property type="glycosylation" value="5 sites, 27 N-linked glycans (1 site)"/>
</dbReference>
<dbReference type="iPTMnet" id="Q9NYZ4"/>
<dbReference type="PhosphoSitePlus" id="Q9NYZ4"/>
<dbReference type="BioMuta" id="SIGLEC8"/>
<dbReference type="DMDM" id="25009268"/>
<dbReference type="jPOST" id="Q9NYZ4"/>
<dbReference type="MassIVE" id="Q9NYZ4"/>
<dbReference type="PaxDb" id="9606-ENSP00000321077"/>
<dbReference type="PeptideAtlas" id="Q9NYZ4"/>
<dbReference type="ProteomicsDB" id="83307">
    <molecule id="Q9NYZ4-1"/>
</dbReference>
<dbReference type="ProteomicsDB" id="83308">
    <molecule id="Q9NYZ4-2"/>
</dbReference>
<dbReference type="ProteomicsDB" id="83309">
    <molecule id="Q9NYZ4-3"/>
</dbReference>
<dbReference type="Antibodypedia" id="2297">
    <property type="antibodies" value="326 antibodies from 33 providers"/>
</dbReference>
<dbReference type="DNASU" id="27181"/>
<dbReference type="Ensembl" id="ENST00000321424.7">
    <molecule id="Q9NYZ4-1"/>
    <property type="protein sequence ID" value="ENSP00000321077.2"/>
    <property type="gene ID" value="ENSG00000105366.15"/>
</dbReference>
<dbReference type="Ensembl" id="ENST00000340550.5">
    <molecule id="Q9NYZ4-2"/>
    <property type="protein sequence ID" value="ENSP00000339448.4"/>
    <property type="gene ID" value="ENSG00000105366.15"/>
</dbReference>
<dbReference type="GeneID" id="27181"/>
<dbReference type="KEGG" id="hsa:27181"/>
<dbReference type="MANE-Select" id="ENST00000321424.7">
    <property type="protein sequence ID" value="ENSP00000321077.2"/>
    <property type="RefSeq nucleotide sequence ID" value="NM_014442.3"/>
    <property type="RefSeq protein sequence ID" value="NP_055257.2"/>
</dbReference>
<dbReference type="UCSC" id="uc002pwt.3">
    <molecule id="Q9NYZ4-1"/>
    <property type="organism name" value="human"/>
</dbReference>
<dbReference type="AGR" id="HGNC:10877"/>
<dbReference type="CTD" id="27181"/>
<dbReference type="DisGeNET" id="27181"/>
<dbReference type="GeneCards" id="SIGLEC8"/>
<dbReference type="HGNC" id="HGNC:10877">
    <property type="gene designation" value="SIGLEC8"/>
</dbReference>
<dbReference type="HPA" id="ENSG00000105366">
    <property type="expression patterns" value="Tissue enhanced (brain, lymphoid tissue)"/>
</dbReference>
<dbReference type="MIM" id="605639">
    <property type="type" value="gene"/>
</dbReference>
<dbReference type="neXtProt" id="NX_Q9NYZ4"/>
<dbReference type="OpenTargets" id="ENSG00000105366"/>
<dbReference type="PharmGKB" id="PA35778"/>
<dbReference type="VEuPathDB" id="HostDB:ENSG00000105366"/>
<dbReference type="eggNOG" id="ENOG502S41V">
    <property type="taxonomic scope" value="Eukaryota"/>
</dbReference>
<dbReference type="GeneTree" id="ENSGT01080000257333"/>
<dbReference type="HOGENOM" id="CLU_024444_6_1_1"/>
<dbReference type="InParanoid" id="Q9NYZ4"/>
<dbReference type="OMA" id="RMPPMIS"/>
<dbReference type="OrthoDB" id="10012075at2759"/>
<dbReference type="PAN-GO" id="Q9NYZ4">
    <property type="GO annotations" value="3 GO annotations based on evolutionary models"/>
</dbReference>
<dbReference type="PhylomeDB" id="Q9NYZ4"/>
<dbReference type="TreeFam" id="TF332441"/>
<dbReference type="PathwayCommons" id="Q9NYZ4"/>
<dbReference type="Reactome" id="R-HSA-198933">
    <property type="pathway name" value="Immunoregulatory interactions between a Lymphoid and a non-Lymphoid cell"/>
</dbReference>
<dbReference type="SignaLink" id="Q9NYZ4"/>
<dbReference type="BioGRID-ORCS" id="27181">
    <property type="hits" value="21 hits in 1148 CRISPR screens"/>
</dbReference>
<dbReference type="GeneWiki" id="SIGLEC8"/>
<dbReference type="GenomeRNAi" id="27181"/>
<dbReference type="Pharos" id="Q9NYZ4">
    <property type="development level" value="Tbio"/>
</dbReference>
<dbReference type="PRO" id="PR:Q9NYZ4"/>
<dbReference type="Proteomes" id="UP000005640">
    <property type="component" value="Chromosome 19"/>
</dbReference>
<dbReference type="RNAct" id="Q9NYZ4">
    <property type="molecule type" value="protein"/>
</dbReference>
<dbReference type="Bgee" id="ENSG00000105366">
    <property type="expression patterns" value="Expressed in C1 segment of cervical spinal cord and 110 other cell types or tissues"/>
</dbReference>
<dbReference type="ExpressionAtlas" id="Q9NYZ4">
    <property type="expression patterns" value="baseline and differential"/>
</dbReference>
<dbReference type="GO" id="GO:0016020">
    <property type="term" value="C:membrane"/>
    <property type="evidence" value="ECO:0000304"/>
    <property type="project" value="ProtInc"/>
</dbReference>
<dbReference type="GO" id="GO:0005886">
    <property type="term" value="C:plasma membrane"/>
    <property type="evidence" value="ECO:0000318"/>
    <property type="project" value="GO_Central"/>
</dbReference>
<dbReference type="GO" id="GO:0030246">
    <property type="term" value="F:carbohydrate binding"/>
    <property type="evidence" value="ECO:0000304"/>
    <property type="project" value="ProtInc"/>
</dbReference>
<dbReference type="GO" id="GO:0033691">
    <property type="term" value="F:sialic acid binding"/>
    <property type="evidence" value="ECO:0000318"/>
    <property type="project" value="GO_Central"/>
</dbReference>
<dbReference type="GO" id="GO:0004888">
    <property type="term" value="F:transmembrane signaling receptor activity"/>
    <property type="evidence" value="ECO:0000304"/>
    <property type="project" value="ProtInc"/>
</dbReference>
<dbReference type="GO" id="GO:0007155">
    <property type="term" value="P:cell adhesion"/>
    <property type="evidence" value="ECO:0000318"/>
    <property type="project" value="GO_Central"/>
</dbReference>
<dbReference type="GO" id="GO:0007165">
    <property type="term" value="P:signal transduction"/>
    <property type="evidence" value="ECO:0000304"/>
    <property type="project" value="ProtInc"/>
</dbReference>
<dbReference type="CDD" id="cd05712">
    <property type="entry name" value="IgV_CD33"/>
    <property type="match status" value="1"/>
</dbReference>
<dbReference type="FunFam" id="2.60.40.10:FF:000912">
    <property type="entry name" value="Myeloid cell surface antigen CD33"/>
    <property type="match status" value="1"/>
</dbReference>
<dbReference type="FunFam" id="2.60.40.10:FF:001240">
    <property type="entry name" value="Sialic acid binding Ig-like lectin E"/>
    <property type="match status" value="1"/>
</dbReference>
<dbReference type="FunFam" id="2.60.40.10:FF:000829">
    <property type="entry name" value="Sialic acid-binding Ig-like lectin 8"/>
    <property type="match status" value="1"/>
</dbReference>
<dbReference type="Gene3D" id="2.60.40.10">
    <property type="entry name" value="Immunoglobulins"/>
    <property type="match status" value="3"/>
</dbReference>
<dbReference type="InterPro" id="IPR007110">
    <property type="entry name" value="Ig-like_dom"/>
</dbReference>
<dbReference type="InterPro" id="IPR036179">
    <property type="entry name" value="Ig-like_dom_sf"/>
</dbReference>
<dbReference type="InterPro" id="IPR013783">
    <property type="entry name" value="Ig-like_fold"/>
</dbReference>
<dbReference type="InterPro" id="IPR003599">
    <property type="entry name" value="Ig_sub"/>
</dbReference>
<dbReference type="InterPro" id="IPR003598">
    <property type="entry name" value="Ig_sub2"/>
</dbReference>
<dbReference type="InterPro" id="IPR013106">
    <property type="entry name" value="Ig_V-set"/>
</dbReference>
<dbReference type="InterPro" id="IPR013151">
    <property type="entry name" value="Immunoglobulin_dom"/>
</dbReference>
<dbReference type="InterPro" id="IPR051036">
    <property type="entry name" value="SIGLEC"/>
</dbReference>
<dbReference type="PANTHER" id="PTHR12035">
    <property type="entry name" value="SIALIC ACID BINDING IMMUNOGLOBULIN-LIKE LECTIN"/>
    <property type="match status" value="1"/>
</dbReference>
<dbReference type="PANTHER" id="PTHR12035:SF106">
    <property type="entry name" value="SIALIC ACID-BINDING IG-LIKE LECTIN 8"/>
    <property type="match status" value="1"/>
</dbReference>
<dbReference type="Pfam" id="PF00047">
    <property type="entry name" value="ig"/>
    <property type="match status" value="1"/>
</dbReference>
<dbReference type="Pfam" id="PF13927">
    <property type="entry name" value="Ig_3"/>
    <property type="match status" value="1"/>
</dbReference>
<dbReference type="Pfam" id="PF07686">
    <property type="entry name" value="V-set"/>
    <property type="match status" value="1"/>
</dbReference>
<dbReference type="SMART" id="SM00409">
    <property type="entry name" value="IG"/>
    <property type="match status" value="3"/>
</dbReference>
<dbReference type="SMART" id="SM00408">
    <property type="entry name" value="IGc2"/>
    <property type="match status" value="1"/>
</dbReference>
<dbReference type="SUPFAM" id="SSF48726">
    <property type="entry name" value="Immunoglobulin"/>
    <property type="match status" value="3"/>
</dbReference>
<dbReference type="PROSITE" id="PS50835">
    <property type="entry name" value="IG_LIKE"/>
    <property type="match status" value="2"/>
</dbReference>
<evidence type="ECO:0000255" key="1"/>
<evidence type="ECO:0000255" key="2">
    <source>
        <dbReference type="PROSITE-ProRule" id="PRU00114"/>
    </source>
</evidence>
<evidence type="ECO:0000256" key="3">
    <source>
        <dbReference type="SAM" id="MobiDB-lite"/>
    </source>
</evidence>
<evidence type="ECO:0000269" key="4">
    <source>
    </source>
</evidence>
<evidence type="ECO:0000269" key="5">
    <source>
    </source>
</evidence>
<evidence type="ECO:0000269" key="6">
    <source>
    </source>
</evidence>
<evidence type="ECO:0000269" key="7">
    <source>
    </source>
</evidence>
<evidence type="ECO:0000269" key="8">
    <source>
    </source>
</evidence>
<evidence type="ECO:0000303" key="9">
    <source>
    </source>
</evidence>
<evidence type="ECO:0000303" key="10">
    <source>
    </source>
</evidence>
<evidence type="ECO:0000303" key="11">
    <source ref="4"/>
</evidence>
<evidence type="ECO:0000305" key="12"/>
<evidence type="ECO:0007744" key="13">
    <source>
        <dbReference type="PDB" id="2N7A"/>
    </source>
</evidence>
<evidence type="ECO:0007744" key="14">
    <source>
        <dbReference type="PDB" id="2N7B"/>
    </source>
</evidence>
<evidence type="ECO:0007829" key="15">
    <source>
        <dbReference type="PDB" id="2N7A"/>
    </source>
</evidence>
<evidence type="ECO:0007829" key="16">
    <source>
        <dbReference type="PDB" id="7QU6"/>
    </source>
</evidence>
<keyword id="KW-0002">3D-structure</keyword>
<keyword id="KW-0025">Alternative splicing</keyword>
<keyword id="KW-0130">Cell adhesion</keyword>
<keyword id="KW-1015">Disulfide bond</keyword>
<keyword id="KW-0325">Glycoprotein</keyword>
<keyword id="KW-0393">Immunoglobulin domain</keyword>
<keyword id="KW-0430">Lectin</keyword>
<keyword id="KW-0472">Membrane</keyword>
<keyword id="KW-1267">Proteomics identification</keyword>
<keyword id="KW-1185">Reference proteome</keyword>
<keyword id="KW-0677">Repeat</keyword>
<keyword id="KW-0732">Signal</keyword>
<keyword id="KW-0812">Transmembrane</keyword>
<keyword id="KW-1133">Transmembrane helix</keyword>
<reference key="1">
    <citation type="journal article" date="2000" name="Biochem. Biophys. Res. Commun.">
        <title>Molecular characterization of a siglec8 variant containing cytoplasmic tyrosine-based motifs, and mapping of the siglec8 gene.</title>
        <authorList>
            <person name="Foussias G."/>
            <person name="Yousef G.M."/>
            <person name="Diamandis E.P."/>
        </authorList>
    </citation>
    <scope>NUCLEOTIDE SEQUENCE [GENOMIC DNA] (ISOFORM 1)</scope>
</reference>
<reference key="2">
    <citation type="journal article" date="2000" name="J. Allergy Clin. Immunol.">
        <title>Identification of SAF-2, a novel siglec expressed on eosinophils, mast cells, and basophils.</title>
        <authorList>
            <person name="Kikly K.K."/>
            <person name="Bochner B.S."/>
            <person name="Freeman S.D."/>
            <person name="Tan K.B."/>
            <person name="Gallagher K.T."/>
            <person name="D'Alessio K.J."/>
            <person name="Holmes S.D."/>
            <person name="Abrahamson J.A."/>
            <person name="Erickson-Miller C.L."/>
            <person name="Murdock P.R."/>
            <person name="Tachimoto H."/>
            <person name="Schleimer R.P."/>
            <person name="White J.R."/>
        </authorList>
    </citation>
    <scope>NUCLEOTIDE SEQUENCE [MRNA] (ISOFORM 3)</scope>
    <scope>TISSUE SPECIFICITY</scope>
    <scope>FUNCTION</scope>
</reference>
<reference key="3">
    <citation type="journal article" date="2000" name="J. Biol. Chem.">
        <title>Siglec-8. A novel eosinophil-specific member of the immunoglobulin superfamily.</title>
        <authorList>
            <person name="Floyd H."/>
            <person name="Ni J."/>
            <person name="Cornish A.L."/>
            <person name="Zeng Z."/>
            <person name="Liu D."/>
            <person name="Carter K.C."/>
            <person name="Steel J."/>
            <person name="Crocker P.R."/>
        </authorList>
    </citation>
    <scope>NUCLEOTIDE SEQUENCE [MRNA] (ISOFORM 3)</scope>
    <scope>TISSUE SPECIFICITY</scope>
    <scope>FUNCTION</scope>
    <source>
        <tissue>Eosinophil</tissue>
    </source>
</reference>
<reference key="4">
    <citation type="submission" date="2000-10" db="EMBL/GenBank/DDBJ databases">
        <authorList>
            <person name="Floyd H."/>
            <person name="Zhang J.Q."/>
            <person name="Crocker P.R."/>
        </authorList>
    </citation>
    <scope>NUCLEOTIDE SEQUENCE [MRNA] (ISOFORM 2)</scope>
</reference>
<reference key="5">
    <citation type="journal article" date="2004" name="Genome Res.">
        <title>The status, quality, and expansion of the NIH full-length cDNA project: the Mammalian Gene Collection (MGC).</title>
        <authorList>
            <consortium name="The MGC Project Team"/>
        </authorList>
    </citation>
    <scope>NUCLEOTIDE SEQUENCE [LARGE SCALE MRNA] (ISOFORM 1)</scope>
    <scope>VARIANT PRO-170</scope>
    <source>
        <tissue>Spleen</tissue>
    </source>
</reference>
<reference evidence="13 14" key="6">
    <citation type="journal article" date="2016" name="Proc. Natl. Acad. Sci. U.S.A.">
        <title>Structural basis for sulfation-dependent self-glycan recognition by the human immune-inhibitory receptor Siglec-8.</title>
        <authorList>
            <person name="Propster J.M."/>
            <person name="Yang F."/>
            <person name="Rabbani S."/>
            <person name="Ernst B."/>
            <person name="Allain F.H."/>
            <person name="Schubert M."/>
        </authorList>
    </citation>
    <scope>STRUCTURE BY NMR OF 17-155 IN COMPLEX WITH 6'-SULFO SIALYL-LEWIS X</scope>
    <scope>DISULFIDE BONDS</scope>
    <scope>MUTAGENESIS OF ARG-72; TYR-74; GLN-75; ARG-125; LYS-132; LYS-136 AND GLN-138</scope>
    <scope>SITE</scope>
    <scope>FUNCTION</scope>
</reference>
<reference key="7">
    <citation type="journal article" date="2011" name="Nature">
        <title>Exome sequencing identifies frequent mutation of the SWI/SNF complex gene PBRM1 in renal carcinoma.</title>
        <authorList>
            <person name="Varela I."/>
            <person name="Tarpey P."/>
            <person name="Raine K."/>
            <person name="Huang D."/>
            <person name="Ong C.K."/>
            <person name="Stephens P."/>
            <person name="Davies H."/>
            <person name="Jones D."/>
            <person name="Lin M.L."/>
            <person name="Teague J."/>
            <person name="Bignell G."/>
            <person name="Butler A."/>
            <person name="Cho J."/>
            <person name="Dalgliesh G.L."/>
            <person name="Galappaththige D."/>
            <person name="Greenman C."/>
            <person name="Hardy C."/>
            <person name="Jia M."/>
            <person name="Latimer C."/>
            <person name="Lau K.W."/>
            <person name="Marshall J."/>
            <person name="McLaren S."/>
            <person name="Menzies A."/>
            <person name="Mudie L."/>
            <person name="Stebbings L."/>
            <person name="Largaespada D.A."/>
            <person name="Wessels L.F.A."/>
            <person name="Richard S."/>
            <person name="Kahnoski R.J."/>
            <person name="Anema J."/>
            <person name="Tuveson D.A."/>
            <person name="Perez-Mancera P.A."/>
            <person name="Mustonen V."/>
            <person name="Fischer A."/>
            <person name="Adams D.J."/>
            <person name="Rust A."/>
            <person name="Chan-On W."/>
            <person name="Subimerb C."/>
            <person name="Dykema K."/>
            <person name="Furge K."/>
            <person name="Campbell P.J."/>
            <person name="Teh B.T."/>
            <person name="Stratton M.R."/>
            <person name="Futreal P.A."/>
        </authorList>
    </citation>
    <scope>VARIANT LEU-282</scope>
</reference>
<gene>
    <name type="primary">SIGLEC8</name>
    <name type="synonym">SAF2</name>
</gene>
<name>SIGL8_HUMAN</name>
<organism>
    <name type="scientific">Homo sapiens</name>
    <name type="common">Human</name>
    <dbReference type="NCBI Taxonomy" id="9606"/>
    <lineage>
        <taxon>Eukaryota</taxon>
        <taxon>Metazoa</taxon>
        <taxon>Chordata</taxon>
        <taxon>Craniata</taxon>
        <taxon>Vertebrata</taxon>
        <taxon>Euteleostomi</taxon>
        <taxon>Mammalia</taxon>
        <taxon>Eutheria</taxon>
        <taxon>Euarchontoglires</taxon>
        <taxon>Primates</taxon>
        <taxon>Haplorrhini</taxon>
        <taxon>Catarrhini</taxon>
        <taxon>Hominidae</taxon>
        <taxon>Homo</taxon>
    </lineage>
</organism>
<proteinExistence type="evidence at protein level"/>
<sequence length="499" mass="54042">MLLLLLLLPLLWGTKGMEGDRQYGDGYLLQVQELVTVQEGLCVHVPCSFSYPQDGWTDSDPVHGYWFRAGDRPYQDAPVATNNPDREVQAETQGRFQLLGDIWSNDCSLSIRDARKRDKGSYFFRLERGSMKWSYKSQLNYKTKQLSVFVTALTHRPDILILGTLESGHSRNLTCSVPWACKQGTPPMISWIGASVSSPGPTTARSSVLTLTPKPQDHGTSLTCQVTLPGTGVTTTSTVRLDVSYPPWNLTMTVFQGDATASTALGNGSSLSVLEGQSLRLVCAVNSNPPARLSWTRGSLTLCPSRSSNPGLLELPRVHVRDEGEFTCRAQNAQGSQHISLSLSLQNEGTGTSRPVSQVTLAAVGGAGATALAFLSFCIIFIIVRSCRKKSARPAAGVGDTGMEDAKAIRGSASQGPLTESWKDGNPLKKPPPAVAPSSGEEGELHYATLSFHKVKPQDPQGQEATDSEYSEIKIHKRETAETQACLRNHNPSSKEVRG</sequence>
<feature type="signal peptide" evidence="1">
    <location>
        <begin position="1"/>
        <end position="16"/>
    </location>
</feature>
<feature type="chain" id="PRO_0000014948" description="Sialic acid-binding Ig-like lectin 8">
    <location>
        <begin position="17"/>
        <end position="499"/>
    </location>
</feature>
<feature type="topological domain" description="Extracellular" evidence="1">
    <location>
        <begin position="17"/>
        <end position="363"/>
    </location>
</feature>
<feature type="transmembrane region" description="Helical" evidence="1">
    <location>
        <begin position="364"/>
        <end position="384"/>
    </location>
</feature>
<feature type="topological domain" description="Cytoplasmic" evidence="1">
    <location>
        <begin position="385"/>
        <end position="499"/>
    </location>
</feature>
<feature type="domain" description="Ig-like V-type">
    <location>
        <begin position="40"/>
        <end position="123"/>
    </location>
</feature>
<feature type="domain" description="Ig-like C2-type 1">
    <location>
        <begin position="157"/>
        <end position="240"/>
    </location>
</feature>
<feature type="domain" description="Ig-like C2-type 2">
    <location>
        <begin position="246"/>
        <end position="344"/>
    </location>
</feature>
<feature type="region of interest" description="Disordered" evidence="3">
    <location>
        <begin position="410"/>
        <end position="443"/>
    </location>
</feature>
<feature type="region of interest" description="Disordered" evidence="3">
    <location>
        <begin position="451"/>
        <end position="470"/>
    </location>
</feature>
<feature type="region of interest" description="Disordered" evidence="3">
    <location>
        <begin position="478"/>
        <end position="499"/>
    </location>
</feature>
<feature type="short sequence motif" description="ITIM motif">
    <location>
        <begin position="445"/>
        <end position="450"/>
    </location>
</feature>
<feature type="short sequence motif" description="SLAM-like motif">
    <location>
        <begin position="468"/>
        <end position="473"/>
    </location>
</feature>
<feature type="binding site" evidence="8 14">
    <location>
        <position position="23"/>
    </location>
    <ligand>
        <name>a carbohydrate</name>
        <dbReference type="ChEBI" id="CHEBI:16646"/>
    </ligand>
</feature>
<feature type="binding site" evidence="8 14">
    <location>
        <begin position="72"/>
        <end position="75"/>
    </location>
    <ligand>
        <name>a carbohydrate</name>
        <dbReference type="ChEBI" id="CHEBI:16646"/>
    </ligand>
</feature>
<feature type="binding site" evidence="8 14">
    <location>
        <position position="125"/>
    </location>
    <ligand>
        <name>a carbohydrate</name>
        <dbReference type="ChEBI" id="CHEBI:16646"/>
    </ligand>
</feature>
<feature type="binding site" evidence="8 14">
    <location>
        <begin position="134"/>
        <end position="138"/>
    </location>
    <ligand>
        <name>a carbohydrate</name>
        <dbReference type="ChEBI" id="CHEBI:16646"/>
    </ligand>
</feature>
<feature type="site" description="Indispensable role in 6'-sulfo sialyl-Lewis X" evidence="8">
    <location>
        <position position="125"/>
    </location>
</feature>
<feature type="glycosylation site" description="N-linked (GlcNAc...) asparagine" evidence="1">
    <location>
        <position position="172"/>
    </location>
</feature>
<feature type="glycosylation site" description="N-linked (GlcNAc...) asparagine" evidence="1">
    <location>
        <position position="249"/>
    </location>
</feature>
<feature type="glycosylation site" description="N-linked (GlcNAc...) asparagine" evidence="1">
    <location>
        <position position="267"/>
    </location>
</feature>
<feature type="disulfide bond" evidence="2">
    <location>
        <begin position="42"/>
        <end position="181"/>
    </location>
</feature>
<feature type="disulfide bond" evidence="2 8 13 14">
    <location>
        <begin position="47"/>
        <end position="107"/>
    </location>
</feature>
<feature type="disulfide bond" evidence="2">
    <location>
        <begin position="175"/>
        <end position="224"/>
    </location>
</feature>
<feature type="disulfide bond" evidence="2">
    <location>
        <begin position="283"/>
        <end position="328"/>
    </location>
</feature>
<feature type="splice variant" id="VSP_002559" description="In isoform 2." evidence="11">
    <original>ALTHRPDILILGTLESGHSRNLTCSVPWACKQGTPPMISWIGASVSSPGPTTARSSVLTLTPKPQDHGTSLTCQVTLPGTGVTTTSTVRLDVSY</original>
    <variation>D</variation>
    <location>
        <begin position="152"/>
        <end position="245"/>
    </location>
</feature>
<feature type="splice variant" id="VSP_002560" description="In isoform 3." evidence="9 10">
    <original>GPLTESWKDGNPLKKPPPAVAPSSGEEGELHYATLSFHKVKPQDPQGQEATDSEYSEIKIHKRETAETQACLRNHNPSSKEVRG</original>
    <variation>VSDVGFSTPSIQPGHL</variation>
    <location>
        <begin position="416"/>
        <end position="499"/>
    </location>
</feature>
<feature type="sequence variant" id="VAR_021487" description="In dbSNP:rs10409962." evidence="6">
    <original>S</original>
    <variation>P</variation>
    <location>
        <position position="170"/>
    </location>
</feature>
<feature type="sequence variant" id="VAR_064751" description="Found in a renal cell carcinoma sample; somatic mutation." evidence="7">
    <original>V</original>
    <variation>L</variation>
    <location>
        <position position="282"/>
    </location>
</feature>
<feature type="sequence variant" id="VAR_049930" description="In dbSNP:rs3829659.">
    <original>R</original>
    <variation>G</variation>
    <location>
        <position position="388"/>
    </location>
</feature>
<feature type="mutagenesis site" description="Strongly impaired binding to 6'-sulfo sialyl-Lewis X." evidence="8">
    <original>R</original>
    <variation>A</variation>
    <location>
        <position position="72"/>
    </location>
</feature>
<feature type="mutagenesis site" description="Modestly affected binding to 6'-sulfo sialyl-Lewis X." evidence="8">
    <original>Y</original>
    <variation>A</variation>
    <location>
        <position position="74"/>
    </location>
</feature>
<feature type="mutagenesis site" description="Modestly affected binding to 6'-sulfo sialyl-Lewis X." evidence="8">
    <original>Q</original>
    <variation>A</variation>
    <location>
        <position position="75"/>
    </location>
</feature>
<feature type="mutagenesis site" description="Abolishes binding to 6'-sulfo sialyl-Lewis X." evidence="8">
    <original>R</original>
    <variation>A</variation>
    <location>
        <position position="125"/>
    </location>
</feature>
<feature type="mutagenesis site" description="Strongly impaired binding to 6'-sulfo sialyl-Lewis X." evidence="8">
    <original>K</original>
    <variation>A</variation>
    <location>
        <position position="132"/>
    </location>
</feature>
<feature type="mutagenesis site" description="Strongly impaired binding to 6'-sulfo sialyl-Lewis X." evidence="8">
    <original>K</original>
    <variation>A</variation>
    <location>
        <position position="136"/>
    </location>
</feature>
<feature type="mutagenesis site" description="Minor effects on binding to 6'-sulfo sialyl-Lewis X." evidence="8">
    <original>Q</original>
    <variation>A</variation>
    <location>
        <position position="138"/>
    </location>
</feature>
<feature type="helix" evidence="15">
    <location>
        <begin position="18"/>
        <end position="20"/>
    </location>
</feature>
<feature type="turn" evidence="16">
    <location>
        <begin position="23"/>
        <end position="26"/>
    </location>
</feature>
<feature type="strand" evidence="16">
    <location>
        <begin position="28"/>
        <end position="31"/>
    </location>
</feature>
<feature type="strand" evidence="16">
    <location>
        <begin position="33"/>
        <end position="38"/>
    </location>
</feature>
<feature type="strand" evidence="16">
    <location>
        <begin position="43"/>
        <end position="45"/>
    </location>
</feature>
<feature type="strand" evidence="16">
    <location>
        <begin position="47"/>
        <end position="50"/>
    </location>
</feature>
<feature type="strand" evidence="16">
    <location>
        <begin position="62"/>
        <end position="68"/>
    </location>
</feature>
<feature type="turn" evidence="16">
    <location>
        <begin position="73"/>
        <end position="75"/>
    </location>
</feature>
<feature type="strand" evidence="16">
    <location>
        <begin position="79"/>
        <end position="82"/>
    </location>
</feature>
<feature type="turn" evidence="16">
    <location>
        <begin position="90"/>
        <end position="95"/>
    </location>
</feature>
<feature type="strand" evidence="16">
    <location>
        <begin position="96"/>
        <end position="98"/>
    </location>
</feature>
<feature type="helix" evidence="16">
    <location>
        <begin position="102"/>
        <end position="104"/>
    </location>
</feature>
<feature type="strand" evidence="16">
    <location>
        <begin position="109"/>
        <end position="111"/>
    </location>
</feature>
<feature type="helix" evidence="16">
    <location>
        <begin position="116"/>
        <end position="118"/>
    </location>
</feature>
<feature type="strand" evidence="16">
    <location>
        <begin position="120"/>
        <end position="128"/>
    </location>
</feature>
<feature type="strand" evidence="16">
    <location>
        <begin position="131"/>
        <end position="135"/>
    </location>
</feature>
<feature type="strand" evidence="16">
    <location>
        <begin position="146"/>
        <end position="151"/>
    </location>
</feature>
<feature type="strand" evidence="15">
    <location>
        <begin position="153"/>
        <end position="155"/>
    </location>
</feature>
<comment type="function">
    <text evidence="4 5 8">Putative adhesion molecule that mediates sialic-acid dependent binding to blood cells (PubMed:10625619, PubMed:10856141). Preferentially binds to alpha-2,3-linked sialic acid. Also binds to alpha-2,6-linked sialic acid. The sialic acid recognition site may be masked by cis interactions with sialic acids on the same cell surface (PubMed:10625619). Recognizes simultaneously epitopes having a terminal N-acetylneuraminic acid (sialic acid) and an underlying 6-O-sulfated galactose. Preferentially binds to Gal-6-sulfated sialyl-Lewis X glycan epitopes (PubMed:27357658).</text>
</comment>
<comment type="interaction">
    <interactant intactId="EBI-4314991">
        <id>Q9NYZ4</id>
    </interactant>
    <interactant intactId="EBI-743871">
        <id>P04155</id>
        <label>TFF1</label>
    </interactant>
    <organismsDiffer>false</organismsDiffer>
    <experiments>3</experiments>
</comment>
<comment type="subcellular location">
    <subcellularLocation>
        <location>Membrane</location>
        <topology>Single-pass type I membrane protein</topology>
    </subcellularLocation>
</comment>
<comment type="alternative products">
    <event type="alternative splicing"/>
    <isoform>
        <id>Q9NYZ4-1</id>
        <name>1</name>
        <name>Long</name>
        <sequence type="displayed"/>
    </isoform>
    <isoform>
        <id>Q9NYZ4-2</id>
        <name>2</name>
        <sequence type="described" ref="VSP_002559"/>
    </isoform>
    <isoform>
        <id>Q9NYZ4-3</id>
        <name>3</name>
        <sequence type="described" ref="VSP_002560"/>
    </isoform>
</comment>
<comment type="tissue specificity">
    <text evidence="4 5">Expressed specifically on blood cells namely basophil, mast cells and eosinophils.</text>
</comment>
<comment type="domain">
    <text>Contains 1 copy of a cytoplasmic motif that is referred to as the immunoreceptor tyrosine-based inhibitor motif (ITIM). This motif is involved in modulation of cellular responses. The phosphorylated ITIM motif can bind the SH2 domain of several SH2-containing phosphatases.</text>
</comment>
<comment type="miscellaneous">
    <molecule>Isoform 3</molecule>
    <text evidence="12">May be produced at very low levels due to a premature stop codon in the mRNA, leading to nonsense-mediated mRNA decay.</text>
</comment>
<comment type="similarity">
    <text evidence="12">Belongs to the immunoglobulin superfamily. SIGLEC (sialic acid binding Ig-like lectin) family.</text>
</comment>
<comment type="online information" name="Functional Glycomics Gateway - Glycan Binding">
    <link uri="http://www.functionalglycomics.org/glycomics/GBPServlet?&amp;operationType=view&amp;cbpId=cbp_hum_Itlect_00146"/>
    <text>Siglec-8</text>
</comment>